<name>SAT_PSYWF</name>
<dbReference type="EC" id="2.7.7.4" evidence="1"/>
<dbReference type="EMBL" id="CP000713">
    <property type="protein sequence ID" value="ABQ94061.1"/>
    <property type="molecule type" value="Genomic_DNA"/>
</dbReference>
<dbReference type="SMR" id="A5WEH0"/>
<dbReference type="STRING" id="349106.PsycPRwf_1111"/>
<dbReference type="KEGG" id="prw:PsycPRwf_1111"/>
<dbReference type="eggNOG" id="COG2046">
    <property type="taxonomic scope" value="Bacteria"/>
</dbReference>
<dbReference type="HOGENOM" id="CLU_022950_1_1_6"/>
<dbReference type="UniPathway" id="UPA00140">
    <property type="reaction ID" value="UER00204"/>
</dbReference>
<dbReference type="GO" id="GO:0005524">
    <property type="term" value="F:ATP binding"/>
    <property type="evidence" value="ECO:0007669"/>
    <property type="project" value="UniProtKB-KW"/>
</dbReference>
<dbReference type="GO" id="GO:0004781">
    <property type="term" value="F:sulfate adenylyltransferase (ATP) activity"/>
    <property type="evidence" value="ECO:0007669"/>
    <property type="project" value="UniProtKB-UniRule"/>
</dbReference>
<dbReference type="GO" id="GO:0070814">
    <property type="term" value="P:hydrogen sulfide biosynthetic process"/>
    <property type="evidence" value="ECO:0007669"/>
    <property type="project" value="UniProtKB-UniRule"/>
</dbReference>
<dbReference type="GO" id="GO:0000103">
    <property type="term" value="P:sulfate assimilation"/>
    <property type="evidence" value="ECO:0007669"/>
    <property type="project" value="UniProtKB-UniRule"/>
</dbReference>
<dbReference type="CDD" id="cd00517">
    <property type="entry name" value="ATPS"/>
    <property type="match status" value="1"/>
</dbReference>
<dbReference type="Gene3D" id="3.40.50.620">
    <property type="entry name" value="HUPs"/>
    <property type="match status" value="1"/>
</dbReference>
<dbReference type="Gene3D" id="3.10.400.10">
    <property type="entry name" value="Sulfate adenylyltransferase"/>
    <property type="match status" value="1"/>
</dbReference>
<dbReference type="HAMAP" id="MF_00066">
    <property type="entry name" value="Sulf_adenylyltr"/>
    <property type="match status" value="1"/>
</dbReference>
<dbReference type="InterPro" id="IPR025980">
    <property type="entry name" value="ATP-Sase_PUA-like_dom"/>
</dbReference>
<dbReference type="InterPro" id="IPR015947">
    <property type="entry name" value="PUA-like_sf"/>
</dbReference>
<dbReference type="InterPro" id="IPR014729">
    <property type="entry name" value="Rossmann-like_a/b/a_fold"/>
</dbReference>
<dbReference type="InterPro" id="IPR020792">
    <property type="entry name" value="SO4_adenylyltransferase_pro"/>
</dbReference>
<dbReference type="InterPro" id="IPR024951">
    <property type="entry name" value="Sulfurylase_cat_dom"/>
</dbReference>
<dbReference type="InterPro" id="IPR002650">
    <property type="entry name" value="Sulphate_adenylyltransferase"/>
</dbReference>
<dbReference type="NCBIfam" id="NF003166">
    <property type="entry name" value="PRK04149.1"/>
    <property type="match status" value="1"/>
</dbReference>
<dbReference type="NCBIfam" id="TIGR00339">
    <property type="entry name" value="sopT"/>
    <property type="match status" value="1"/>
</dbReference>
<dbReference type="PANTHER" id="PTHR43509">
    <property type="match status" value="1"/>
</dbReference>
<dbReference type="PANTHER" id="PTHR43509:SF1">
    <property type="entry name" value="SULFATE ADENYLYLTRANSFERASE"/>
    <property type="match status" value="1"/>
</dbReference>
<dbReference type="Pfam" id="PF01747">
    <property type="entry name" value="ATP-sulfurylase"/>
    <property type="match status" value="1"/>
</dbReference>
<dbReference type="Pfam" id="PF14306">
    <property type="entry name" value="PUA_2"/>
    <property type="match status" value="1"/>
</dbReference>
<dbReference type="SUPFAM" id="SSF52374">
    <property type="entry name" value="Nucleotidylyl transferase"/>
    <property type="match status" value="1"/>
</dbReference>
<dbReference type="SUPFAM" id="SSF88697">
    <property type="entry name" value="PUA domain-like"/>
    <property type="match status" value="1"/>
</dbReference>
<organism>
    <name type="scientific">Psychrobacter sp. (strain PRwf-1)</name>
    <dbReference type="NCBI Taxonomy" id="349106"/>
    <lineage>
        <taxon>Bacteria</taxon>
        <taxon>Pseudomonadati</taxon>
        <taxon>Pseudomonadota</taxon>
        <taxon>Gammaproteobacteria</taxon>
        <taxon>Moraxellales</taxon>
        <taxon>Moraxellaceae</taxon>
        <taxon>Psychrobacter</taxon>
    </lineage>
</organism>
<keyword id="KW-0067">ATP-binding</keyword>
<keyword id="KW-0547">Nucleotide-binding</keyword>
<keyword id="KW-0548">Nucleotidyltransferase</keyword>
<keyword id="KW-0808">Transferase</keyword>
<sequence>MTSQKIVKRLGKTSIVPPHGSDELKPLLLEGEALSQALHNAKNLPKITLSSRERGDLIMLGIGGFTPLDGFMNQADWQGVVDEMTLKTGANKGLFWPIPITLSTSKEQADSLAPGDEVALVAEDGEIMGVITVEETYTIDKAHECQQVFTTTEEEHPGVKQVMEQGEVNVAGAVKVFSQGEFPTLYPEIYKTPAETRKLFEEKNWQTIAAFQTRNPMHRSHEYLAKIAIEICDGVMIHSLLGALKPGDIPAEVRQEAIKTLIDNYFKKDTVIQAGYPLDMRYAGPREALLHALFRQNYGCSHLIVGRDHAGVGDYYGPFDAQAIFDEIDKDAMLTQPLKIDWTFWCNACQAMASTKTCPHDAEHHVKVSGTKLRKALSEDQEVPENFSRPEVLQILRNYYESIAKEDRAEVKLVGASAQ</sequence>
<proteinExistence type="inferred from homology"/>
<gene>
    <name evidence="1" type="primary">sat</name>
    <name type="ordered locus">PsycPRwf_1111</name>
</gene>
<reference key="1">
    <citation type="submission" date="2007-05" db="EMBL/GenBank/DDBJ databases">
        <title>Complete sequence of chromosome of Psychrobacter sp. PRwf-1.</title>
        <authorList>
            <consortium name="US DOE Joint Genome Institute"/>
            <person name="Copeland A."/>
            <person name="Lucas S."/>
            <person name="Lapidus A."/>
            <person name="Barry K."/>
            <person name="Detter J.C."/>
            <person name="Glavina del Rio T."/>
            <person name="Hammon N."/>
            <person name="Israni S."/>
            <person name="Dalin E."/>
            <person name="Tice H."/>
            <person name="Pitluck S."/>
            <person name="Chain P."/>
            <person name="Malfatti S."/>
            <person name="Shin M."/>
            <person name="Vergez L."/>
            <person name="Schmutz J."/>
            <person name="Larimer F."/>
            <person name="Land M."/>
            <person name="Hauser L."/>
            <person name="Kyrpides N."/>
            <person name="Kim E."/>
            <person name="Tiedje J."/>
            <person name="Richardson P."/>
        </authorList>
    </citation>
    <scope>NUCLEOTIDE SEQUENCE [LARGE SCALE GENOMIC DNA]</scope>
    <source>
        <strain>PRwf-1</strain>
    </source>
</reference>
<evidence type="ECO:0000255" key="1">
    <source>
        <dbReference type="HAMAP-Rule" id="MF_00066"/>
    </source>
</evidence>
<accession>A5WEH0</accession>
<feature type="chain" id="PRO_0000340629" description="Sulfate adenylyltransferase">
    <location>
        <begin position="1"/>
        <end position="419"/>
    </location>
</feature>
<comment type="catalytic activity">
    <reaction evidence="1">
        <text>sulfate + ATP + H(+) = adenosine 5'-phosphosulfate + diphosphate</text>
        <dbReference type="Rhea" id="RHEA:18133"/>
        <dbReference type="ChEBI" id="CHEBI:15378"/>
        <dbReference type="ChEBI" id="CHEBI:16189"/>
        <dbReference type="ChEBI" id="CHEBI:30616"/>
        <dbReference type="ChEBI" id="CHEBI:33019"/>
        <dbReference type="ChEBI" id="CHEBI:58243"/>
        <dbReference type="EC" id="2.7.7.4"/>
    </reaction>
</comment>
<comment type="pathway">
    <text evidence="1">Sulfur metabolism; hydrogen sulfide biosynthesis; sulfite from sulfate: step 1/3.</text>
</comment>
<comment type="similarity">
    <text evidence="1">Belongs to the sulfate adenylyltransferase family.</text>
</comment>
<protein>
    <recommendedName>
        <fullName evidence="1">Sulfate adenylyltransferase</fullName>
        <ecNumber evidence="1">2.7.7.4</ecNumber>
    </recommendedName>
    <alternativeName>
        <fullName evidence="1">ATP-sulfurylase</fullName>
    </alternativeName>
    <alternativeName>
        <fullName evidence="1">Sulfate adenylate transferase</fullName>
        <shortName evidence="1">SAT</shortName>
    </alternativeName>
</protein>